<gene>
    <name type="primary">chmp6</name>
    <name type="synonym">vps20</name>
    <name type="ORF">DDB_G0287021</name>
</gene>
<name>CHMP6_DICDI</name>
<protein>
    <recommendedName>
        <fullName>Charged multivesicular body protein 6</fullName>
    </recommendedName>
    <alternativeName>
        <fullName>Vacuolar protein-sorting-associated protein 20</fullName>
    </alternativeName>
</protein>
<feature type="chain" id="PRO_0000367442" description="Charged multivesicular body protein 6">
    <location>
        <begin position="1"/>
        <end position="218"/>
    </location>
</feature>
<feature type="coiled-coil region" evidence="2">
    <location>
        <begin position="15"/>
        <end position="42"/>
    </location>
</feature>
<feature type="coiled-coil region" evidence="2">
    <location>
        <begin position="70"/>
        <end position="172"/>
    </location>
</feature>
<sequence>MGILFSHCSGGREKEDKISKTDRAVLNLKIQRDKLKNYQTQVLEIAIAKECSKAGKKNQALLALKKKKYQEKMLDESFANLQNIEELIANVEQAEIQVRIFESLKQGNESLKEIQKEMSLEDVENLMEETAEAIQYQNDISEALSGKFSKEEEDDLLNELDEMEKQLNAQQYPKVPETQLPKIELPIEDAIEEGKQRKSTTNGLNHILIIACIINHIF</sequence>
<evidence type="ECO:0000250" key="1"/>
<evidence type="ECO:0000255" key="2"/>
<evidence type="ECO:0000305" key="3"/>
<comment type="function">
    <text evidence="1">Probable core component of the endosomal sorting required for transport complex III (ESCRT-III) which is involved in multivesicular bodies (MVBs) formation and sorting of endosomal cargo proteins into MVBs. MVBs contain intraluminal vesicles (ILVs) that are generated by invagination and scission from the limiting membrane of the endosome and are delivered to lysosomes enabling degradation of membrane proteins (By similarity).</text>
</comment>
<comment type="subunit">
    <text evidence="1">Probable core component of the endosomal sorting required for transport complex III (ESCRT-III).</text>
</comment>
<comment type="subcellular location">
    <subcellularLocation>
        <location evidence="1">Endosome membrane</location>
        <topology evidence="1">Peripheral membrane protein</topology>
    </subcellularLocation>
</comment>
<comment type="similarity">
    <text evidence="3">Belongs to the SNF7 family.</text>
</comment>
<comment type="sequence caution" evidence="3">
    <conflict type="erroneous gene model prediction">
        <sequence resource="EMBL-CDS" id="EAL63937"/>
    </conflict>
</comment>
<reference key="1">
    <citation type="journal article" date="2005" name="Nature">
        <title>The genome of the social amoeba Dictyostelium discoideum.</title>
        <authorList>
            <person name="Eichinger L."/>
            <person name="Pachebat J.A."/>
            <person name="Gloeckner G."/>
            <person name="Rajandream M.A."/>
            <person name="Sucgang R."/>
            <person name="Berriman M."/>
            <person name="Song J."/>
            <person name="Olsen R."/>
            <person name="Szafranski K."/>
            <person name="Xu Q."/>
            <person name="Tunggal B."/>
            <person name="Kummerfeld S."/>
            <person name="Madera M."/>
            <person name="Konfortov B.A."/>
            <person name="Rivero F."/>
            <person name="Bankier A.T."/>
            <person name="Lehmann R."/>
            <person name="Hamlin N."/>
            <person name="Davies R."/>
            <person name="Gaudet P."/>
            <person name="Fey P."/>
            <person name="Pilcher K."/>
            <person name="Chen G."/>
            <person name="Saunders D."/>
            <person name="Sodergren E.J."/>
            <person name="Davis P."/>
            <person name="Kerhornou A."/>
            <person name="Nie X."/>
            <person name="Hall N."/>
            <person name="Anjard C."/>
            <person name="Hemphill L."/>
            <person name="Bason N."/>
            <person name="Farbrother P."/>
            <person name="Desany B."/>
            <person name="Just E."/>
            <person name="Morio T."/>
            <person name="Rost R."/>
            <person name="Churcher C.M."/>
            <person name="Cooper J."/>
            <person name="Haydock S."/>
            <person name="van Driessche N."/>
            <person name="Cronin A."/>
            <person name="Goodhead I."/>
            <person name="Muzny D.M."/>
            <person name="Mourier T."/>
            <person name="Pain A."/>
            <person name="Lu M."/>
            <person name="Harper D."/>
            <person name="Lindsay R."/>
            <person name="Hauser H."/>
            <person name="James K.D."/>
            <person name="Quiles M."/>
            <person name="Madan Babu M."/>
            <person name="Saito T."/>
            <person name="Buchrieser C."/>
            <person name="Wardroper A."/>
            <person name="Felder M."/>
            <person name="Thangavelu M."/>
            <person name="Johnson D."/>
            <person name="Knights A."/>
            <person name="Loulseged H."/>
            <person name="Mungall K.L."/>
            <person name="Oliver K."/>
            <person name="Price C."/>
            <person name="Quail M.A."/>
            <person name="Urushihara H."/>
            <person name="Hernandez J."/>
            <person name="Rabbinowitsch E."/>
            <person name="Steffen D."/>
            <person name="Sanders M."/>
            <person name="Ma J."/>
            <person name="Kohara Y."/>
            <person name="Sharp S."/>
            <person name="Simmonds M.N."/>
            <person name="Spiegler S."/>
            <person name="Tivey A."/>
            <person name="Sugano S."/>
            <person name="White B."/>
            <person name="Walker D."/>
            <person name="Woodward J.R."/>
            <person name="Winckler T."/>
            <person name="Tanaka Y."/>
            <person name="Shaulsky G."/>
            <person name="Schleicher M."/>
            <person name="Weinstock G.M."/>
            <person name="Rosenthal A."/>
            <person name="Cox E.C."/>
            <person name="Chisholm R.L."/>
            <person name="Gibbs R.A."/>
            <person name="Loomis W.F."/>
            <person name="Platzer M."/>
            <person name="Kay R.R."/>
            <person name="Williams J.G."/>
            <person name="Dear P.H."/>
            <person name="Noegel A.A."/>
            <person name="Barrell B.G."/>
            <person name="Kuspa A."/>
        </authorList>
    </citation>
    <scope>NUCLEOTIDE SEQUENCE [LARGE SCALE GENOMIC DNA]</scope>
    <source>
        <strain>AX4</strain>
    </source>
</reference>
<keyword id="KW-0175">Coiled coil</keyword>
<keyword id="KW-0967">Endosome</keyword>
<keyword id="KW-0472">Membrane</keyword>
<keyword id="KW-0653">Protein transport</keyword>
<keyword id="KW-1185">Reference proteome</keyword>
<keyword id="KW-0813">Transport</keyword>
<accession>Q54KZ4</accession>
<proteinExistence type="inferred from homology"/>
<organism>
    <name type="scientific">Dictyostelium discoideum</name>
    <name type="common">Social amoeba</name>
    <dbReference type="NCBI Taxonomy" id="44689"/>
    <lineage>
        <taxon>Eukaryota</taxon>
        <taxon>Amoebozoa</taxon>
        <taxon>Evosea</taxon>
        <taxon>Eumycetozoa</taxon>
        <taxon>Dictyostelia</taxon>
        <taxon>Dictyosteliales</taxon>
        <taxon>Dictyosteliaceae</taxon>
        <taxon>Dictyostelium</taxon>
    </lineage>
</organism>
<dbReference type="EMBL" id="AAFI02000095">
    <property type="protein sequence ID" value="EAL63937.1"/>
    <property type="status" value="ALT_SEQ"/>
    <property type="molecule type" value="Genomic_DNA"/>
</dbReference>
<dbReference type="RefSeq" id="XP_637438.1">
    <property type="nucleotide sequence ID" value="XM_632346.1"/>
</dbReference>
<dbReference type="SMR" id="Q54KZ4"/>
<dbReference type="FunCoup" id="Q54KZ4">
    <property type="interactions" value="589"/>
</dbReference>
<dbReference type="STRING" id="44689.Q54KZ4"/>
<dbReference type="PaxDb" id="44689-DDB0234035"/>
<dbReference type="EnsemblProtists" id="EAL63937">
    <property type="protein sequence ID" value="EAL63937"/>
    <property type="gene ID" value="DDB_G0287021"/>
</dbReference>
<dbReference type="GeneID" id="8625906"/>
<dbReference type="KEGG" id="ddi:DDB_G0287021"/>
<dbReference type="dictyBase" id="DDB_G0287021">
    <property type="gene designation" value="vps20"/>
</dbReference>
<dbReference type="VEuPathDB" id="AmoebaDB:DDB_G0287021"/>
<dbReference type="eggNOG" id="KOG2910">
    <property type="taxonomic scope" value="Eukaryota"/>
</dbReference>
<dbReference type="InParanoid" id="Q54KZ4"/>
<dbReference type="Reactome" id="R-DDI-1632852">
    <property type="pathway name" value="Macroautophagy"/>
</dbReference>
<dbReference type="Reactome" id="R-DDI-917729">
    <property type="pathway name" value="Endosomal Sorting Complex Required For Transport (ESCRT)"/>
</dbReference>
<dbReference type="Reactome" id="R-DDI-9668328">
    <property type="pathway name" value="Sealing of the nuclear envelope (NE) by ESCRT-III"/>
</dbReference>
<dbReference type="PRO" id="PR:Q54KZ4"/>
<dbReference type="Proteomes" id="UP000002195">
    <property type="component" value="Chromosome 4"/>
</dbReference>
<dbReference type="GO" id="GO:0000815">
    <property type="term" value="C:ESCRT III complex"/>
    <property type="evidence" value="ECO:0000250"/>
    <property type="project" value="dictyBase"/>
</dbReference>
<dbReference type="GO" id="GO:0005771">
    <property type="term" value="C:multivesicular body"/>
    <property type="evidence" value="ECO:0000318"/>
    <property type="project" value="GO_Central"/>
</dbReference>
<dbReference type="GO" id="GO:0032511">
    <property type="term" value="P:late endosome to vacuole transport via multivesicular body sorting pathway"/>
    <property type="evidence" value="ECO:0000318"/>
    <property type="project" value="GO_Central"/>
</dbReference>
<dbReference type="GO" id="GO:0015031">
    <property type="term" value="P:protein transport"/>
    <property type="evidence" value="ECO:0007669"/>
    <property type="project" value="UniProtKB-KW"/>
</dbReference>
<dbReference type="GO" id="GO:0006900">
    <property type="term" value="P:vesicle budding from membrane"/>
    <property type="evidence" value="ECO:0000318"/>
    <property type="project" value="GO_Central"/>
</dbReference>
<dbReference type="InterPro" id="IPR005024">
    <property type="entry name" value="Snf7_fam"/>
</dbReference>
<dbReference type="PANTHER" id="PTHR22761">
    <property type="entry name" value="CHARGED MULTIVESICULAR BODY PROTEIN"/>
    <property type="match status" value="1"/>
</dbReference>
<dbReference type="PANTHER" id="PTHR22761:SF5">
    <property type="entry name" value="CHARGED MULTIVESICULAR BODY PROTEIN 6"/>
    <property type="match status" value="1"/>
</dbReference>
<dbReference type="Pfam" id="PF03357">
    <property type="entry name" value="Snf7"/>
    <property type="match status" value="1"/>
</dbReference>